<reference key="1">
    <citation type="journal article" date="1991" name="Science">
        <title>Cloning of a factor required for activity of the Ah (dioxin) receptor.</title>
        <authorList>
            <person name="Hoffman E.C."/>
            <person name="Reyes H."/>
            <person name="Chu F.-F."/>
            <person name="Sander F."/>
            <person name="Conley L.H."/>
            <person name="Brooks B.A."/>
            <person name="Hankinson O."/>
        </authorList>
    </citation>
    <scope>NUCLEOTIDE SEQUENCE [MRNA] (ISOFORMS 1 AND 2)</scope>
</reference>
<reference key="2">
    <citation type="submission" date="1999-03" db="EMBL/GenBank/DDBJ databases">
        <authorList>
            <person name="Scheel J."/>
        </authorList>
    </citation>
    <scope>NUCLEOTIDE SEQUENCE [GENOMIC DNA]</scope>
</reference>
<reference key="3">
    <citation type="journal article" date="2004" name="Nat. Genet.">
        <title>Complete sequencing and characterization of 21,243 full-length human cDNAs.</title>
        <authorList>
            <person name="Ota T."/>
            <person name="Suzuki Y."/>
            <person name="Nishikawa T."/>
            <person name="Otsuki T."/>
            <person name="Sugiyama T."/>
            <person name="Irie R."/>
            <person name="Wakamatsu A."/>
            <person name="Hayashi K."/>
            <person name="Sato H."/>
            <person name="Nagai K."/>
            <person name="Kimura K."/>
            <person name="Makita H."/>
            <person name="Sekine M."/>
            <person name="Obayashi M."/>
            <person name="Nishi T."/>
            <person name="Shibahara T."/>
            <person name="Tanaka T."/>
            <person name="Ishii S."/>
            <person name="Yamamoto J."/>
            <person name="Saito K."/>
            <person name="Kawai Y."/>
            <person name="Isono Y."/>
            <person name="Nakamura Y."/>
            <person name="Nagahari K."/>
            <person name="Murakami K."/>
            <person name="Yasuda T."/>
            <person name="Iwayanagi T."/>
            <person name="Wagatsuma M."/>
            <person name="Shiratori A."/>
            <person name="Sudo H."/>
            <person name="Hosoiri T."/>
            <person name="Kaku Y."/>
            <person name="Kodaira H."/>
            <person name="Kondo H."/>
            <person name="Sugawara M."/>
            <person name="Takahashi M."/>
            <person name="Kanda K."/>
            <person name="Yokoi T."/>
            <person name="Furuya T."/>
            <person name="Kikkawa E."/>
            <person name="Omura Y."/>
            <person name="Abe K."/>
            <person name="Kamihara K."/>
            <person name="Katsuta N."/>
            <person name="Sato K."/>
            <person name="Tanikawa M."/>
            <person name="Yamazaki M."/>
            <person name="Ninomiya K."/>
            <person name="Ishibashi T."/>
            <person name="Yamashita H."/>
            <person name="Murakawa K."/>
            <person name="Fujimori K."/>
            <person name="Tanai H."/>
            <person name="Kimata M."/>
            <person name="Watanabe M."/>
            <person name="Hiraoka S."/>
            <person name="Chiba Y."/>
            <person name="Ishida S."/>
            <person name="Ono Y."/>
            <person name="Takiguchi S."/>
            <person name="Watanabe S."/>
            <person name="Yosida M."/>
            <person name="Hotuta T."/>
            <person name="Kusano J."/>
            <person name="Kanehori K."/>
            <person name="Takahashi-Fujii A."/>
            <person name="Hara H."/>
            <person name="Tanase T.-O."/>
            <person name="Nomura Y."/>
            <person name="Togiya S."/>
            <person name="Komai F."/>
            <person name="Hara R."/>
            <person name="Takeuchi K."/>
            <person name="Arita M."/>
            <person name="Imose N."/>
            <person name="Musashino K."/>
            <person name="Yuuki H."/>
            <person name="Oshima A."/>
            <person name="Sasaki N."/>
            <person name="Aotsuka S."/>
            <person name="Yoshikawa Y."/>
            <person name="Matsunawa H."/>
            <person name="Ichihara T."/>
            <person name="Shiohata N."/>
            <person name="Sano S."/>
            <person name="Moriya S."/>
            <person name="Momiyama H."/>
            <person name="Satoh N."/>
            <person name="Takami S."/>
            <person name="Terashima Y."/>
            <person name="Suzuki O."/>
            <person name="Nakagawa S."/>
            <person name="Senoh A."/>
            <person name="Mizoguchi H."/>
            <person name="Goto Y."/>
            <person name="Shimizu F."/>
            <person name="Wakebe H."/>
            <person name="Hishigaki H."/>
            <person name="Watanabe T."/>
            <person name="Sugiyama A."/>
            <person name="Takemoto M."/>
            <person name="Kawakami B."/>
            <person name="Yamazaki M."/>
            <person name="Watanabe K."/>
            <person name="Kumagai A."/>
            <person name="Itakura S."/>
            <person name="Fukuzumi Y."/>
            <person name="Fujimori Y."/>
            <person name="Komiyama M."/>
            <person name="Tashiro H."/>
            <person name="Tanigami A."/>
            <person name="Fujiwara T."/>
            <person name="Ono T."/>
            <person name="Yamada K."/>
            <person name="Fujii Y."/>
            <person name="Ozaki K."/>
            <person name="Hirao M."/>
            <person name="Ohmori Y."/>
            <person name="Kawabata A."/>
            <person name="Hikiji T."/>
            <person name="Kobatake N."/>
            <person name="Inagaki H."/>
            <person name="Ikema Y."/>
            <person name="Okamoto S."/>
            <person name="Okitani R."/>
            <person name="Kawakami T."/>
            <person name="Noguchi S."/>
            <person name="Itoh T."/>
            <person name="Shigeta K."/>
            <person name="Senba T."/>
            <person name="Matsumura K."/>
            <person name="Nakajima Y."/>
            <person name="Mizuno T."/>
            <person name="Morinaga M."/>
            <person name="Sasaki M."/>
            <person name="Togashi T."/>
            <person name="Oyama M."/>
            <person name="Hata H."/>
            <person name="Watanabe M."/>
            <person name="Komatsu T."/>
            <person name="Mizushima-Sugano J."/>
            <person name="Satoh T."/>
            <person name="Shirai Y."/>
            <person name="Takahashi Y."/>
            <person name="Nakagawa K."/>
            <person name="Okumura K."/>
            <person name="Nagase T."/>
            <person name="Nomura N."/>
            <person name="Kikuchi H."/>
            <person name="Masuho Y."/>
            <person name="Yamashita R."/>
            <person name="Nakai K."/>
            <person name="Yada T."/>
            <person name="Nakamura Y."/>
            <person name="Ohara O."/>
            <person name="Isogai T."/>
            <person name="Sugano S."/>
        </authorList>
    </citation>
    <scope>NUCLEOTIDE SEQUENCE [LARGE SCALE MRNA] (ISOFORM 1)</scope>
    <source>
        <tissue>Testis</tissue>
        <tissue>Thalamus</tissue>
        <tissue>Uterus</tissue>
    </source>
</reference>
<reference key="4">
    <citation type="submission" date="2005-03" db="EMBL/GenBank/DDBJ databases">
        <title>Homo sapiens protein coding cDNA.</title>
        <authorList>
            <person name="Totoki Y."/>
            <person name="Toyoda A."/>
            <person name="Takeda T."/>
            <person name="Sakaki Y."/>
            <person name="Tanaka A."/>
            <person name="Yokoyama S."/>
            <person name="Ohara O."/>
            <person name="Nagase T."/>
            <person name="Kikuno R.F."/>
        </authorList>
    </citation>
    <scope>NUCLEOTIDE SEQUENCE [LARGE SCALE MRNA] (ISOFORM 4)</scope>
    <source>
        <tissue>Aortic endothelium</tissue>
    </source>
</reference>
<reference key="5">
    <citation type="journal article" date="2001" name="Genome Res.">
        <title>Towards a catalog of human genes and proteins: sequencing and analysis of 500 novel complete protein coding human cDNAs.</title>
        <authorList>
            <person name="Wiemann S."/>
            <person name="Weil B."/>
            <person name="Wellenreuther R."/>
            <person name="Gassenhuber J."/>
            <person name="Glassl S."/>
            <person name="Ansorge W."/>
            <person name="Boecher M."/>
            <person name="Bloecker H."/>
            <person name="Bauersachs S."/>
            <person name="Blum H."/>
            <person name="Lauber J."/>
            <person name="Duesterhoeft A."/>
            <person name="Beyer A."/>
            <person name="Koehrer K."/>
            <person name="Strack N."/>
            <person name="Mewes H.-W."/>
            <person name="Ottenwaelder B."/>
            <person name="Obermaier B."/>
            <person name="Tampe J."/>
            <person name="Heubner D."/>
            <person name="Wambutt R."/>
            <person name="Korn B."/>
            <person name="Klein M."/>
            <person name="Poustka A."/>
        </authorList>
    </citation>
    <scope>NUCLEOTIDE SEQUENCE [LARGE SCALE MRNA] (ISOFORM 3)</scope>
    <source>
        <tissue>Brain</tissue>
    </source>
</reference>
<reference key="6">
    <citation type="submission" date="2003-10" db="EMBL/GenBank/DDBJ databases">
        <authorList>
            <consortium name="NIEHS SNPs program"/>
        </authorList>
    </citation>
    <scope>NUCLEOTIDE SEQUENCE [GENOMIC DNA]</scope>
    <scope>VARIANT GLU-517</scope>
</reference>
<reference key="7">
    <citation type="journal article" date="2006" name="Nature">
        <title>The DNA sequence and biological annotation of human chromosome 1.</title>
        <authorList>
            <person name="Gregory S.G."/>
            <person name="Barlow K.F."/>
            <person name="McLay K.E."/>
            <person name="Kaul R."/>
            <person name="Swarbreck D."/>
            <person name="Dunham A."/>
            <person name="Scott C.E."/>
            <person name="Howe K.L."/>
            <person name="Woodfine K."/>
            <person name="Spencer C.C.A."/>
            <person name="Jones M.C."/>
            <person name="Gillson C."/>
            <person name="Searle S."/>
            <person name="Zhou Y."/>
            <person name="Kokocinski F."/>
            <person name="McDonald L."/>
            <person name="Evans R."/>
            <person name="Phillips K."/>
            <person name="Atkinson A."/>
            <person name="Cooper R."/>
            <person name="Jones C."/>
            <person name="Hall R.E."/>
            <person name="Andrews T.D."/>
            <person name="Lloyd C."/>
            <person name="Ainscough R."/>
            <person name="Almeida J.P."/>
            <person name="Ambrose K.D."/>
            <person name="Anderson F."/>
            <person name="Andrew R.W."/>
            <person name="Ashwell R.I.S."/>
            <person name="Aubin K."/>
            <person name="Babbage A.K."/>
            <person name="Bagguley C.L."/>
            <person name="Bailey J."/>
            <person name="Beasley H."/>
            <person name="Bethel G."/>
            <person name="Bird C.P."/>
            <person name="Bray-Allen S."/>
            <person name="Brown J.Y."/>
            <person name="Brown A.J."/>
            <person name="Buckley D."/>
            <person name="Burton J."/>
            <person name="Bye J."/>
            <person name="Carder C."/>
            <person name="Chapman J.C."/>
            <person name="Clark S.Y."/>
            <person name="Clarke G."/>
            <person name="Clee C."/>
            <person name="Cobley V."/>
            <person name="Collier R.E."/>
            <person name="Corby N."/>
            <person name="Coville G.J."/>
            <person name="Davies J."/>
            <person name="Deadman R."/>
            <person name="Dunn M."/>
            <person name="Earthrowl M."/>
            <person name="Ellington A.G."/>
            <person name="Errington H."/>
            <person name="Frankish A."/>
            <person name="Frankland J."/>
            <person name="French L."/>
            <person name="Garner P."/>
            <person name="Garnett J."/>
            <person name="Gay L."/>
            <person name="Ghori M.R.J."/>
            <person name="Gibson R."/>
            <person name="Gilby L.M."/>
            <person name="Gillett W."/>
            <person name="Glithero R.J."/>
            <person name="Grafham D.V."/>
            <person name="Griffiths C."/>
            <person name="Griffiths-Jones S."/>
            <person name="Grocock R."/>
            <person name="Hammond S."/>
            <person name="Harrison E.S.I."/>
            <person name="Hart E."/>
            <person name="Haugen E."/>
            <person name="Heath P.D."/>
            <person name="Holmes S."/>
            <person name="Holt K."/>
            <person name="Howden P.J."/>
            <person name="Hunt A.R."/>
            <person name="Hunt S.E."/>
            <person name="Hunter G."/>
            <person name="Isherwood J."/>
            <person name="James R."/>
            <person name="Johnson C."/>
            <person name="Johnson D."/>
            <person name="Joy A."/>
            <person name="Kay M."/>
            <person name="Kershaw J.K."/>
            <person name="Kibukawa M."/>
            <person name="Kimberley A.M."/>
            <person name="King A."/>
            <person name="Knights A.J."/>
            <person name="Lad H."/>
            <person name="Laird G."/>
            <person name="Lawlor S."/>
            <person name="Leongamornlert D.A."/>
            <person name="Lloyd D.M."/>
            <person name="Loveland J."/>
            <person name="Lovell J."/>
            <person name="Lush M.J."/>
            <person name="Lyne R."/>
            <person name="Martin S."/>
            <person name="Mashreghi-Mohammadi M."/>
            <person name="Matthews L."/>
            <person name="Matthews N.S.W."/>
            <person name="McLaren S."/>
            <person name="Milne S."/>
            <person name="Mistry S."/>
            <person name="Moore M.J.F."/>
            <person name="Nickerson T."/>
            <person name="O'Dell C.N."/>
            <person name="Oliver K."/>
            <person name="Palmeiri A."/>
            <person name="Palmer S.A."/>
            <person name="Parker A."/>
            <person name="Patel D."/>
            <person name="Pearce A.V."/>
            <person name="Peck A.I."/>
            <person name="Pelan S."/>
            <person name="Phelps K."/>
            <person name="Phillimore B.J."/>
            <person name="Plumb R."/>
            <person name="Rajan J."/>
            <person name="Raymond C."/>
            <person name="Rouse G."/>
            <person name="Saenphimmachak C."/>
            <person name="Sehra H.K."/>
            <person name="Sheridan E."/>
            <person name="Shownkeen R."/>
            <person name="Sims S."/>
            <person name="Skuce C.D."/>
            <person name="Smith M."/>
            <person name="Steward C."/>
            <person name="Subramanian S."/>
            <person name="Sycamore N."/>
            <person name="Tracey A."/>
            <person name="Tromans A."/>
            <person name="Van Helmond Z."/>
            <person name="Wall M."/>
            <person name="Wallis J.M."/>
            <person name="White S."/>
            <person name="Whitehead S.L."/>
            <person name="Wilkinson J.E."/>
            <person name="Willey D.L."/>
            <person name="Williams H."/>
            <person name="Wilming L."/>
            <person name="Wray P.W."/>
            <person name="Wu Z."/>
            <person name="Coulson A."/>
            <person name="Vaudin M."/>
            <person name="Sulston J.E."/>
            <person name="Durbin R.M."/>
            <person name="Hubbard T."/>
            <person name="Wooster R."/>
            <person name="Dunham I."/>
            <person name="Carter N.P."/>
            <person name="McVean G."/>
            <person name="Ross M.T."/>
            <person name="Harrow J."/>
            <person name="Olson M.V."/>
            <person name="Beck S."/>
            <person name="Rogers J."/>
            <person name="Bentley D.R."/>
        </authorList>
    </citation>
    <scope>NUCLEOTIDE SEQUENCE [LARGE SCALE GENOMIC DNA]</scope>
</reference>
<reference key="8">
    <citation type="submission" date="2005-09" db="EMBL/GenBank/DDBJ databases">
        <authorList>
            <person name="Mural R.J."/>
            <person name="Istrail S."/>
            <person name="Sutton G.G."/>
            <person name="Florea L."/>
            <person name="Halpern A.L."/>
            <person name="Mobarry C.M."/>
            <person name="Lippert R."/>
            <person name="Walenz B."/>
            <person name="Shatkay H."/>
            <person name="Dew I."/>
            <person name="Miller J.R."/>
            <person name="Flanigan M.J."/>
            <person name="Edwards N.J."/>
            <person name="Bolanos R."/>
            <person name="Fasulo D."/>
            <person name="Halldorsson B.V."/>
            <person name="Hannenhalli S."/>
            <person name="Turner R."/>
            <person name="Yooseph S."/>
            <person name="Lu F."/>
            <person name="Nusskern D.R."/>
            <person name="Shue B.C."/>
            <person name="Zheng X.H."/>
            <person name="Zhong F."/>
            <person name="Delcher A.L."/>
            <person name="Huson D.H."/>
            <person name="Kravitz S.A."/>
            <person name="Mouchard L."/>
            <person name="Reinert K."/>
            <person name="Remington K.A."/>
            <person name="Clark A.G."/>
            <person name="Waterman M.S."/>
            <person name="Eichler E.E."/>
            <person name="Adams M.D."/>
            <person name="Hunkapiller M.W."/>
            <person name="Myers E.W."/>
            <person name="Venter J.C."/>
        </authorList>
    </citation>
    <scope>NUCLEOTIDE SEQUENCE [LARGE SCALE GENOMIC DNA]</scope>
</reference>
<reference key="9">
    <citation type="journal article" date="1995" name="Proc. Natl. Acad. Sci. U.S.A.">
        <title>Hypoxia-inducible factor 1 is a basic-helix-loop-helix-PAS heterodimer regulated by cellular O2 tension.</title>
        <authorList>
            <person name="Wang G.L."/>
            <person name="Jiang B.-H."/>
            <person name="Rue E.A."/>
            <person name="Semenza G.L."/>
        </authorList>
    </citation>
    <scope>PROTEIN SEQUENCE OF 186-203 AND 662-694</scope>
</reference>
<reference key="10">
    <citation type="journal article" date="1992" name="Science">
        <title>Identification of the Ah receptor nuclear translocator protein (Arnt) as a component of the DNA binding form of the Ah receptor.</title>
        <authorList>
            <person name="Reyes H."/>
            <person name="Reisz-Porszasz S."/>
            <person name="Hankinson O."/>
        </authorList>
    </citation>
    <scope>CHARACTERIZATION</scope>
</reference>
<reference key="11">
    <citation type="journal article" date="1996" name="J. Biol. Chem.">
        <title>Functional characterization of DNA-binding domains of the subunits of the heterodimeric aryl hydrocarbon receptor complex imputing novel and canonical basic helix-loop-helix protein-DNA interactions.</title>
        <authorList>
            <person name="Bacsi S.G."/>
            <person name="Hankinson O."/>
        </authorList>
    </citation>
    <scope>DNA-BINDING</scope>
    <scope>MUTAGENESIS OF ARG-91; ASN-93; HIS-94; GLU-98; ARG-99; ARG-101 AND ARG-102</scope>
</reference>
<reference key="12">
    <citation type="journal article" date="1999" name="Arch. Biochem. Biophys.">
        <title>Interactions of nuclear receptor coactivator/corepressor proteins with the aryl hydrocarbon receptor complex.</title>
        <authorList>
            <person name="Nguyen T.A."/>
            <person name="Hoivik D."/>
            <person name="Lee J.-E."/>
            <person name="Safe S."/>
        </authorList>
    </citation>
    <scope>INTERACTION WITH NOCA7</scope>
</reference>
<reference key="13">
    <citation type="journal article" date="2008" name="Proc. Natl. Acad. Sci. U.S.A.">
        <title>A quantitative atlas of mitotic phosphorylation.</title>
        <authorList>
            <person name="Dephoure N."/>
            <person name="Zhou C."/>
            <person name="Villen J."/>
            <person name="Beausoleil S.A."/>
            <person name="Bakalarski C.E."/>
            <person name="Elledge S.J."/>
            <person name="Gygi S.P."/>
        </authorList>
    </citation>
    <scope>PHOSPHORYLATION [LARGE SCALE ANALYSIS] AT SER-77</scope>
    <scope>IDENTIFICATION BY MASS SPECTROMETRY [LARGE SCALE ANALYSIS]</scope>
    <source>
        <tissue>Cervix carcinoma</tissue>
    </source>
</reference>
<reference key="14">
    <citation type="journal article" date="2010" name="J. Cell Sci.">
        <title>Casein kinase 1 regulates human hypoxia-inducible factor HIF-1.</title>
        <authorList>
            <person name="Kalousi A."/>
            <person name="Mylonis I."/>
            <person name="Politou A.S."/>
            <person name="Chachami G."/>
            <person name="Paraskeva E."/>
            <person name="Simos G."/>
        </authorList>
    </citation>
    <scope>INTERACTION WITH HIF1A</scope>
</reference>
<reference key="15">
    <citation type="journal article" date="2012" name="Proc. Natl. Acad. Sci. U.S.A.">
        <title>N-terminal acetylome analyses and functional insights of the N-terminal acetyltransferase NatB.</title>
        <authorList>
            <person name="Van Damme P."/>
            <person name="Lasa M."/>
            <person name="Polevoda B."/>
            <person name="Gazquez C."/>
            <person name="Elosegui-Artola A."/>
            <person name="Kim D.S."/>
            <person name="De Juan-Pardo E."/>
            <person name="Demeyer K."/>
            <person name="Hole K."/>
            <person name="Larrea E."/>
            <person name="Timmerman E."/>
            <person name="Prieto J."/>
            <person name="Arnesen T."/>
            <person name="Sherman F."/>
            <person name="Gevaert K."/>
            <person name="Aldabe R."/>
        </authorList>
    </citation>
    <scope>ACETYLATION [LARGE SCALE ANALYSIS] AT ALA-2</scope>
    <scope>CLEAVAGE OF INITIATOR METHIONINE [LARGE SCALE ANALYSIS]</scope>
    <scope>IDENTIFICATION BY MASS SPECTROMETRY [LARGE SCALE ANALYSIS]</scope>
</reference>
<reference key="16">
    <citation type="journal article" date="2013" name="J. Proteome Res.">
        <title>Toward a comprehensive characterization of a human cancer cell phosphoproteome.</title>
        <authorList>
            <person name="Zhou H."/>
            <person name="Di Palma S."/>
            <person name="Preisinger C."/>
            <person name="Peng M."/>
            <person name="Polat A.N."/>
            <person name="Heck A.J."/>
            <person name="Mohammed S."/>
        </authorList>
    </citation>
    <scope>PHOSPHORYLATION [LARGE SCALE ANALYSIS] AT SER-77</scope>
    <scope>IDENTIFICATION BY MASS SPECTROMETRY [LARGE SCALE ANALYSIS]</scope>
    <source>
        <tissue>Cervix carcinoma</tissue>
    </source>
</reference>
<reference key="17">
    <citation type="journal article" date="2014" name="J. Proteomics">
        <title>An enzyme assisted RP-RPLC approach for in-depth analysis of human liver phosphoproteome.</title>
        <authorList>
            <person name="Bian Y."/>
            <person name="Song C."/>
            <person name="Cheng K."/>
            <person name="Dong M."/>
            <person name="Wang F."/>
            <person name="Huang J."/>
            <person name="Sun D."/>
            <person name="Wang L."/>
            <person name="Ye M."/>
            <person name="Zou H."/>
        </authorList>
    </citation>
    <scope>IDENTIFICATION BY MASS SPECTROMETRY [LARGE SCALE ANALYSIS]</scope>
    <source>
        <tissue>Liver</tissue>
    </source>
</reference>
<reference key="18">
    <citation type="journal article" date="2017" name="J. Biol. Chem.">
        <title>The crystal structure of the AhRR-ARNT heterodimer reveals the structural basis of the repression of AhR-mediated transcription.</title>
        <authorList>
            <person name="Sakurai S."/>
            <person name="Shimizu T."/>
            <person name="Ohto U."/>
        </authorList>
    </citation>
    <scope>INTERACTION WITH AHRR</scope>
</reference>
<reference key="19">
    <citation type="journal article" date="2017" name="Nat. Struct. Mol. Biol.">
        <title>Site-specific mapping of the human SUMO proteome reveals co-modification with phosphorylation.</title>
        <authorList>
            <person name="Hendriks I.A."/>
            <person name="Lyon D."/>
            <person name="Young C."/>
            <person name="Jensen L.J."/>
            <person name="Vertegaal A.C."/>
            <person name="Nielsen M.L."/>
        </authorList>
    </citation>
    <scope>SUMOYLATION [LARGE SCALE ANALYSIS] AT LYS-58</scope>
    <scope>IDENTIFICATION BY MASS SPECTROMETRY [LARGE SCALE ANALYSIS]</scope>
</reference>
<reference key="20">
    <citation type="journal article" date="2021" name="Sci. Rep.">
        <title>The role of DNA-binding and ARNT dimerization on the nucleo-cytoplasmic translocation of the aryl hydrocarbon receptor.</title>
        <authorList>
            <person name="Haidar R."/>
            <person name="Henkler F."/>
            <person name="Kugler J."/>
            <person name="Rosin A."/>
            <person name="Genkinger D."/>
            <person name="Laux P."/>
            <person name="Luch A."/>
        </authorList>
    </citation>
    <scope>FUNCTION</scope>
    <scope>INTERACTION WITH ARNT</scope>
</reference>
<reference evidence="20 21" key="21">
    <citation type="journal article" date="2005" name="J. Mol. Biol.">
        <title>Structural basis of ARNT PAS-B dimerization: use of a common beta-sheet interface for hetero- and homodimerization.</title>
        <authorList>
            <person name="Card P.B."/>
            <person name="Erbel P.J."/>
            <person name="Gardner K.H."/>
        </authorList>
    </citation>
    <scope>STRUCTURE BY NMR OF 356-470 IN COMPLEX WITH EPAS1</scope>
    <scope>SUBUNIT</scope>
    <scope>INTERACTION WITH EPAS1</scope>
</reference>
<reference evidence="22" key="22">
    <citation type="journal article" date="2009" name="Proc. Natl. Acad. Sci. U.S.A.">
        <title>ARNT PAS-B has a fragile native state structure with an alternative beta-sheet register nearby in sequence space.</title>
        <authorList>
            <person name="Evans M.R."/>
            <person name="Card P.B."/>
            <person name="Gardner K.H."/>
        </authorList>
    </citation>
    <scope>STRUCTURE BY NMR OF 356-470</scope>
</reference>
<reference evidence="23" key="23">
    <citation type="journal article" date="2017" name="Proc. Natl. Acad. Sci. U.S.A.">
        <title>Structural hierarchy controlling dimerization and target DNA recognition in the AHR transcriptional complex.</title>
        <authorList>
            <person name="Seok S.H."/>
            <person name="Lee W."/>
            <person name="Jiang L."/>
            <person name="Molugu K."/>
            <person name="Zheng A."/>
            <person name="Li Y."/>
            <person name="Park S."/>
            <person name="Bradfield C.A."/>
            <person name="Xing Y."/>
        </authorList>
    </citation>
    <scope>X-RAY CRYSTALLOGRAPHY (4.00 ANGSTROMS) OF 70-346 IN COMPLEXES WITH AHR AND DNA</scope>
    <scope>FUNCTION</scope>
    <scope>INTERACTION WITH AHR</scope>
    <scope>REGION</scope>
</reference>
<feature type="initiator methionine" description="Removed" evidence="25">
    <location>
        <position position="1"/>
    </location>
</feature>
<feature type="chain" id="PRO_0000127118" description="Aryl hydrocarbon receptor nuclear translocator">
    <location>
        <begin position="2"/>
        <end position="789"/>
    </location>
</feature>
<feature type="domain" description="bHLH" evidence="4">
    <location>
        <begin position="89"/>
        <end position="142"/>
    </location>
</feature>
<feature type="domain" description="PAS 1" evidence="3">
    <location>
        <begin position="161"/>
        <end position="235"/>
    </location>
</feature>
<feature type="domain" description="PAS 2" evidence="3">
    <location>
        <begin position="349"/>
        <end position="419"/>
    </location>
</feature>
<feature type="domain" description="PAC">
    <location>
        <begin position="424"/>
        <end position="467"/>
    </location>
</feature>
<feature type="region of interest" description="Disordered" evidence="5">
    <location>
        <begin position="1"/>
        <end position="97"/>
    </location>
</feature>
<feature type="region of interest" description="DNA-binding" evidence="9">
    <location>
        <begin position="88"/>
        <end position="128"/>
    </location>
</feature>
<feature type="region of interest" description="Required for heterodimer formation with EPAS1" evidence="2">
    <location>
        <begin position="112"/>
        <end position="264"/>
    </location>
</feature>
<feature type="region of interest" description="Required for heterodimer formation with HIF1A" evidence="2">
    <location>
        <begin position="112"/>
        <end position="168"/>
    </location>
</feature>
<feature type="region of interest" description="Mediates the transcription activity and dimerization of the AHR:ARNT complex" evidence="2">
    <location>
        <begin position="167"/>
        <end position="171"/>
    </location>
</feature>
<feature type="region of interest" description="Disordered" evidence="5">
    <location>
        <begin position="465"/>
        <end position="492"/>
    </location>
</feature>
<feature type="region of interest" description="Disordered" evidence="5">
    <location>
        <begin position="672"/>
        <end position="789"/>
    </location>
</feature>
<feature type="compositionally biased region" description="Polar residues" evidence="5">
    <location>
        <begin position="1"/>
        <end position="14"/>
    </location>
</feature>
<feature type="compositionally biased region" description="Gly residues" evidence="5">
    <location>
        <begin position="26"/>
        <end position="35"/>
    </location>
</feature>
<feature type="compositionally biased region" description="Basic and acidic residues" evidence="5">
    <location>
        <begin position="60"/>
        <end position="97"/>
    </location>
</feature>
<feature type="compositionally biased region" description="Polar residues" evidence="5">
    <location>
        <begin position="465"/>
        <end position="481"/>
    </location>
</feature>
<feature type="compositionally biased region" description="Low complexity" evidence="5">
    <location>
        <begin position="672"/>
        <end position="696"/>
    </location>
</feature>
<feature type="compositionally biased region" description="Polar residues" evidence="5">
    <location>
        <begin position="708"/>
        <end position="719"/>
    </location>
</feature>
<feature type="compositionally biased region" description="Low complexity" evidence="5">
    <location>
        <begin position="723"/>
        <end position="733"/>
    </location>
</feature>
<feature type="compositionally biased region" description="Low complexity" evidence="5">
    <location>
        <begin position="743"/>
        <end position="756"/>
    </location>
</feature>
<feature type="modified residue" description="N-acetylalanine" evidence="25">
    <location>
        <position position="2"/>
    </location>
</feature>
<feature type="modified residue" description="Phosphoserine" evidence="24 26">
    <location>
        <position position="77"/>
    </location>
</feature>
<feature type="cross-link" description="Glycyl lysine isopeptide (Lys-Gly) (interchain with G-Cter in SUMO2)" evidence="27">
    <location>
        <position position="58"/>
    </location>
</feature>
<feature type="splice variant" id="VSP_036532" description="In isoform 3." evidence="13">
    <location>
        <begin position="1"/>
        <end position="9"/>
    </location>
</feature>
<feature type="splice variant" id="VSP_002092" description="In isoform 2." evidence="14">
    <location>
        <begin position="77"/>
        <end position="91"/>
    </location>
</feature>
<feature type="splice variant" id="VSP_036533" description="In isoform 3." evidence="13">
    <location>
        <begin position="319"/>
        <end position="323"/>
    </location>
</feature>
<feature type="splice variant" id="VSP_055030" description="In isoform 4." evidence="15">
    <location>
        <begin position="601"/>
        <end position="602"/>
    </location>
</feature>
<feature type="sequence variant" id="VAR_024280" description="In dbSNP:rs2229175.">
    <original>R</original>
    <variation>Q</variation>
    <location>
        <position position="430"/>
    </location>
</feature>
<feature type="sequence variant" id="VAR_014819" description="In dbSNP:rs1805133.">
    <original>D</original>
    <variation>N</variation>
    <location>
        <position position="511"/>
    </location>
</feature>
<feature type="sequence variant" id="VAR_018906" description="In dbSNP:rs10305741." evidence="12">
    <original>D</original>
    <variation>E</variation>
    <location>
        <position position="517"/>
    </location>
</feature>
<feature type="sequence variant" id="VAR_020189" description="In dbSNP:rs2275237.">
    <original>P</original>
    <variation>L</variation>
    <location>
        <position position="706"/>
    </location>
</feature>
<feature type="mutagenesis site" description="Diminishes DNA interaction." evidence="11">
    <original>R</original>
    <variation>A</variation>
    <location>
        <position position="91"/>
    </location>
</feature>
<feature type="mutagenesis site" description="Diminishes DNA interaction." evidence="11">
    <original>N</original>
    <variation>A</variation>
    <location>
        <position position="93"/>
    </location>
</feature>
<feature type="mutagenesis site" description="Severely diminishes DNA interaction." evidence="11">
    <original>H</original>
    <variation>A</variation>
    <location>
        <position position="94"/>
    </location>
</feature>
<feature type="mutagenesis site" description="Severely diminishes DNA interaction." evidence="11">
    <original>E</original>
    <variation>A</variation>
    <location>
        <position position="98"/>
    </location>
</feature>
<feature type="mutagenesis site" description="Diminishes DNA interaction." evidence="11">
    <original>R</original>
    <variation>A</variation>
    <location>
        <position position="99"/>
    </location>
</feature>
<feature type="mutagenesis site" description="Severely diminishes DNA interaction." evidence="11">
    <original>R</original>
    <variation>A</variation>
    <location>
        <position position="101"/>
    </location>
</feature>
<feature type="mutagenesis site" description="Severely diminishes DNA interaction." evidence="11">
    <original>R</original>
    <variation>A</variation>
    <location>
        <position position="102"/>
    </location>
</feature>
<feature type="sequence conflict" description="In Ref. 3; BAG36518." evidence="16" ref="3">
    <original>R</original>
    <variation>H</variation>
    <location>
        <position position="627"/>
    </location>
</feature>
<feature type="strand" evidence="29">
    <location>
        <begin position="356"/>
        <end position="358"/>
    </location>
</feature>
<feature type="strand" evidence="31">
    <location>
        <begin position="362"/>
        <end position="367"/>
    </location>
</feature>
<feature type="strand" evidence="31">
    <location>
        <begin position="371"/>
        <end position="376"/>
    </location>
</feature>
<feature type="helix" evidence="31">
    <location>
        <begin position="380"/>
        <end position="384"/>
    </location>
</feature>
<feature type="helix" evidence="31">
    <location>
        <begin position="388"/>
        <end position="390"/>
    </location>
</feature>
<feature type="turn" evidence="31">
    <location>
        <begin position="391"/>
        <end position="393"/>
    </location>
</feature>
<feature type="helix" evidence="31">
    <location>
        <begin position="396"/>
        <end position="399"/>
    </location>
</feature>
<feature type="turn" evidence="31">
    <location>
        <begin position="402"/>
        <end position="404"/>
    </location>
</feature>
<feature type="helix" evidence="31">
    <location>
        <begin position="405"/>
        <end position="415"/>
    </location>
</feature>
<feature type="turn" evidence="30">
    <location>
        <begin position="416"/>
        <end position="420"/>
    </location>
</feature>
<feature type="strand" evidence="31">
    <location>
        <begin position="423"/>
        <end position="430"/>
    </location>
</feature>
<feature type="strand" evidence="31">
    <location>
        <begin position="436"/>
        <end position="446"/>
    </location>
</feature>
<feature type="turn" evidence="28">
    <location>
        <begin position="449"/>
        <end position="451"/>
    </location>
</feature>
<feature type="strand" evidence="31">
    <location>
        <begin position="456"/>
        <end position="463"/>
    </location>
</feature>
<accession>P27540</accession>
<accession>B2R9H1</accession>
<accession>C4AMA1</accession>
<accession>F8WAP6</accession>
<accession>Q59ED4</accession>
<accession>Q5QP39</accession>
<accession>Q8NDC7</accession>
<gene>
    <name evidence="19" type="primary">ARNT</name>
    <name type="synonym">BHLHE2</name>
</gene>
<proteinExistence type="evidence at protein level"/>
<keyword id="KW-0002">3D-structure</keyword>
<keyword id="KW-0007">Acetylation</keyword>
<keyword id="KW-0010">Activator</keyword>
<keyword id="KW-0025">Alternative splicing</keyword>
<keyword id="KW-0903">Direct protein sequencing</keyword>
<keyword id="KW-0238">DNA-binding</keyword>
<keyword id="KW-1017">Isopeptide bond</keyword>
<keyword id="KW-0539">Nucleus</keyword>
<keyword id="KW-0597">Phosphoprotein</keyword>
<keyword id="KW-1267">Proteomics identification</keyword>
<keyword id="KW-1185">Reference proteome</keyword>
<keyword id="KW-0677">Repeat</keyword>
<keyword id="KW-0804">Transcription</keyword>
<keyword id="KW-0805">Transcription regulation</keyword>
<keyword id="KW-0832">Ubl conjugation</keyword>
<protein>
    <recommendedName>
        <fullName evidence="16">Aryl hydrocarbon receptor nuclear translocator</fullName>
        <shortName>ARNT protein</shortName>
    </recommendedName>
    <alternativeName>
        <fullName>Class E basic helix-loop-helix protein 2</fullName>
        <shortName>bHLHe2</shortName>
    </alternativeName>
    <alternativeName>
        <fullName>Dioxin receptor, nuclear translocator</fullName>
    </alternativeName>
    <alternativeName>
        <fullName>Hypoxia-inducible factor 1-beta</fullName>
        <shortName>HIF-1-beta</shortName>
        <shortName>HIF1-beta</shortName>
    </alternativeName>
</protein>
<organism>
    <name type="scientific">Homo sapiens</name>
    <name type="common">Human</name>
    <dbReference type="NCBI Taxonomy" id="9606"/>
    <lineage>
        <taxon>Eukaryota</taxon>
        <taxon>Metazoa</taxon>
        <taxon>Chordata</taxon>
        <taxon>Craniata</taxon>
        <taxon>Vertebrata</taxon>
        <taxon>Euteleostomi</taxon>
        <taxon>Mammalia</taxon>
        <taxon>Eutheria</taxon>
        <taxon>Euarchontoglires</taxon>
        <taxon>Primates</taxon>
        <taxon>Haplorrhini</taxon>
        <taxon>Catarrhini</taxon>
        <taxon>Hominidae</taxon>
        <taxon>Homo</taxon>
    </lineage>
</organism>
<comment type="function">
    <text evidence="2 9 10 18">Required for activity of the AHR. Upon ligand binding, AHR translocates into the nucleus, where it heterodimerizes with ARNT and induces transcription by binding to xenobiotic response elements (XRE). Not required for the ligand-binding subunit to translocate from the cytosol to the nucleus after ligand binding (PubMed:34521881). The complex initiates transcription of genes involved in the regulation of a variety of biological processes, including angiogenesis, hematopoiesis, drug and lipid metabolism, cell motility and immune modulation (Probable). The heterodimer binds to core DNA sequence 5'-TACGTG-3' within the hypoxia response element (HRE) of target gene promoters and functions as a transcriptional regulator of the adaptive response to hypoxia (By similarity). The heterodimer ARNT:AHR binds to core DNA sequence 5'-TGCGTG-3' within the dioxin response element (DRE) of target gene promoters and activates their transcription (PubMed:28396409).</text>
</comment>
<comment type="subunit">
    <text evidence="1 2 6 7 8 9 10 17">Monomer. Homodimer only upon binding to a DNA (By similarity). Efficient DNA binding requires dimerization with another bHLH protein. Interacts with TACC3 (By similarity). Interacts with HIF1A, EPAS1, NPAS1 and NPAS3; forms a heterodimer that binds core DNA sequence 5'-TACGTG-3' within the hypoxia response element (HRE) of target gene promoters (By similarity) (PubMed:16181639, PubMed:20699359). Forms a heterodimer with AHRR, as well as with other bHLH proteins (Probable). Interacts with NOCA7 (PubMed:10395741). Interacts with TACC3 (By similarity). Interacts with AHR; the heterodimer ARNT:AHR binds to core DNA sequence 5'-TGCGTG-3' within the dioxin response element (DRE) of target gene promoters and activates their transcription (PubMed:28396409, PubMed:34521881). Interacts with SIM1 and NPAS4 (By similarity).</text>
</comment>
<comment type="interaction">
    <interactant intactId="EBI-80809">
        <id>P27540</id>
    </interactant>
    <interactant intactId="EBI-80780">
        <id>P35869</id>
        <label>AHR</label>
    </interactant>
    <organismsDiffer>false</organismsDiffer>
    <experiments>7</experiments>
</comment>
<comment type="interaction">
    <interactant intactId="EBI-80809">
        <id>P27540</id>
    </interactant>
    <interactant intactId="EBI-447470">
        <id>Q99814</id>
        <label>EPAS1</label>
    </interactant>
    <organismsDiffer>false</organismsDiffer>
    <experiments>8</experiments>
</comment>
<comment type="interaction">
    <interactant intactId="EBI-80809">
        <id>P27540</id>
    </interactant>
    <interactant intactId="EBI-447269">
        <id>Q16665</id>
        <label>HIF1A</label>
    </interactant>
    <organismsDiffer>false</organismsDiffer>
    <experiments>13</experiments>
</comment>
<comment type="interaction">
    <interactant intactId="EBI-80809">
        <id>P27540</id>
    </interactant>
    <interactant intactId="EBI-80799">
        <id>Q8NI08</id>
        <label>NCOA7</label>
    </interactant>
    <organismsDiffer>false</organismsDiffer>
    <experiments>2</experiments>
</comment>
<comment type="interaction">
    <interactant intactId="EBI-80809">
        <id>P27540</id>
    </interactant>
    <interactant intactId="EBI-80830">
        <id>Q9Y618</id>
        <label>NCOR2</label>
    </interactant>
    <organismsDiffer>false</organismsDiffer>
    <experiments>2</experiments>
</comment>
<comment type="subcellular location">
    <subcellularLocation>
        <location evidence="18">Nucleus</location>
    </subcellularLocation>
</comment>
<comment type="alternative products">
    <event type="alternative splicing"/>
    <isoform>
        <id>P27540-1</id>
        <name>1</name>
        <name>Long</name>
        <sequence type="displayed"/>
    </isoform>
    <isoform>
        <id>P27540-2</id>
        <name>2</name>
        <name>Short</name>
        <sequence type="described" ref="VSP_002092"/>
    </isoform>
    <isoform>
        <id>P27540-3</id>
        <name>3</name>
        <sequence type="described" ref="VSP_036532 VSP_036533"/>
    </isoform>
    <isoform>
        <id>P27540-4</id>
        <name>4</name>
        <sequence type="described" ref="VSP_055030"/>
    </isoform>
</comment>
<comment type="sequence caution" evidence="16">
    <conflict type="erroneous initiation">
        <sequence resource="EMBL-CDS" id="BAD93114"/>
    </conflict>
    <text>Extended N-terminus.</text>
</comment>
<comment type="sequence caution" evidence="16">
    <conflict type="erroneous initiation">
        <sequence resource="EMBL-CDS" id="CAD38953"/>
    </conflict>
    <text>Extended N-terminus.</text>
</comment>
<comment type="online information" name="Atlas of Genetics and Cytogenetics in Oncology and Haematology">
    <link uri="https://atlasgeneticsoncology.org/gene/223/ARNT"/>
</comment>
<sequence>MAATTANPEMTSDVPSLGPAIASGNSGPGIQGGGAIVQRAIKRRPGLDFDDDGEGNSKFLRCDDDQMSNDKERFARSDDEQSSADKERLARENHSEIERRRRNKMTAYITELSDMVPTCSALARKPDKLTILRMAVSHMKSLRGTGNTSTDGSYKPSFLTDQELKHLILEAADGFLFIVSCETGRVVYVSDSVTPVLNQPQSEWFGSTLYDQVHPDDVDKLREQLSTSENALTGRILDLKTGTVKKEGQQSSMRMCMGSRRSFICRMRCGSSSVDPVSVNRLSFVRNRCRNGLGSVKDGEPHFVVVHCTGYIKAWPPAGVSLPDDDPEAGQGSKFCLVAIGRLQVTSSPNCTDMSNVCQPTEFISRHNIEGIFTFVDHRCVATVGYQPQELLGKNIVEFCHPEDQQLLRDSFQQVVKLKGQVLSVMFRFRSKNQEWLWMRTSSFTFQNPYSDEIEYIICTNTNVKNSSQEPRPTLSNTIQRPQLGPTANLPLEMGSGQLAPRQQQQQTELDMVPGRDGLASYNHSQVVQPVTTTGPEHSKPLEKSDGLFAQDRDPRFSEIYHNINADQSKGISSSTVPATQQLFSQGNTFPPTPRPAENFRNSGLAPPVTIVQPSASAGQMLAQISRHSNPTQGATPTWTPTTRSGFSAQQVATQATAKTRTSQFGVGSFQTPSSFSSMSLPGAPTASPGAAAYPSLTNRGSNFAPETGQTAGQFQTRTAEGVGVWPQWQGQQPHHRSSSSEQHVQQPPAQQPGQPEVFQEMLSMLGDQSNSYNNEEFPDLTMFPPFSE</sequence>
<dbReference type="EMBL" id="M69238">
    <property type="protein sequence ID" value="AAA51777.1"/>
    <property type="molecule type" value="mRNA"/>
</dbReference>
<dbReference type="EMBL" id="Y18859">
    <property type="protein sequence ID" value="CAC21446.1"/>
    <property type="molecule type" value="Genomic_DNA"/>
</dbReference>
<dbReference type="EMBL" id="AJ251863">
    <property type="protein sequence ID" value="CAC21446.1"/>
    <property type="status" value="JOINED"/>
    <property type="molecule type" value="Genomic_DNA"/>
</dbReference>
<dbReference type="EMBL" id="AJ404851">
    <property type="protein sequence ID" value="CAC21446.1"/>
    <property type="status" value="JOINED"/>
    <property type="molecule type" value="Genomic_DNA"/>
</dbReference>
<dbReference type="EMBL" id="AJ404852">
    <property type="protein sequence ID" value="CAC21446.1"/>
    <property type="status" value="JOINED"/>
    <property type="molecule type" value="Genomic_DNA"/>
</dbReference>
<dbReference type="EMBL" id="AJ404853">
    <property type="protein sequence ID" value="CAC21446.1"/>
    <property type="status" value="JOINED"/>
    <property type="molecule type" value="Genomic_DNA"/>
</dbReference>
<dbReference type="EMBL" id="AJ404854">
    <property type="protein sequence ID" value="CAC21446.1"/>
    <property type="status" value="JOINED"/>
    <property type="molecule type" value="Genomic_DNA"/>
</dbReference>
<dbReference type="EMBL" id="AK290177">
    <property type="protein sequence ID" value="BAF82866.1"/>
    <property type="molecule type" value="mRNA"/>
</dbReference>
<dbReference type="EMBL" id="AK293027">
    <property type="protein sequence ID" value="BAF85716.1"/>
    <property type="molecule type" value="mRNA"/>
</dbReference>
<dbReference type="EMBL" id="AK313780">
    <property type="protein sequence ID" value="BAG36518.1"/>
    <property type="molecule type" value="mRNA"/>
</dbReference>
<dbReference type="EMBL" id="AB209877">
    <property type="protein sequence ID" value="BAD93114.1"/>
    <property type="status" value="ALT_INIT"/>
    <property type="molecule type" value="mRNA"/>
</dbReference>
<dbReference type="EMBL" id="AL834279">
    <property type="protein sequence ID" value="CAD38953.1"/>
    <property type="status" value="ALT_INIT"/>
    <property type="molecule type" value="mRNA"/>
</dbReference>
<dbReference type="EMBL" id="AY430083">
    <property type="protein sequence ID" value="AAQ96598.1"/>
    <property type="molecule type" value="Genomic_DNA"/>
</dbReference>
<dbReference type="EMBL" id="AL355860">
    <property type="status" value="NOT_ANNOTATED_CDS"/>
    <property type="molecule type" value="Genomic_DNA"/>
</dbReference>
<dbReference type="EMBL" id="CH471121">
    <property type="protein sequence ID" value="EAW53510.1"/>
    <property type="molecule type" value="Genomic_DNA"/>
</dbReference>
<dbReference type="EMBL" id="CH471121">
    <property type="protein sequence ID" value="EAW53513.1"/>
    <property type="molecule type" value="Genomic_DNA"/>
</dbReference>
<dbReference type="CCDS" id="CCDS65641.1">
    <molecule id="P27540-3"/>
</dbReference>
<dbReference type="CCDS" id="CCDS65642.1">
    <molecule id="P27540-4"/>
</dbReference>
<dbReference type="CCDS" id="CCDS970.1">
    <molecule id="P27540-1"/>
</dbReference>
<dbReference type="CCDS" id="CCDS971.1">
    <molecule id="P27540-2"/>
</dbReference>
<dbReference type="PIR" id="I59550">
    <property type="entry name" value="I59550"/>
</dbReference>
<dbReference type="RefSeq" id="NP_001184254.1">
    <property type="nucleotide sequence ID" value="NM_001197325.1"/>
</dbReference>
<dbReference type="RefSeq" id="NP_001272964.1">
    <molecule id="P27540-3"/>
    <property type="nucleotide sequence ID" value="NM_001286035.2"/>
</dbReference>
<dbReference type="RefSeq" id="NP_001272965.1">
    <molecule id="P27540-4"/>
    <property type="nucleotide sequence ID" value="NM_001286036.2"/>
</dbReference>
<dbReference type="RefSeq" id="NP_001659.1">
    <molecule id="P27540-1"/>
    <property type="nucleotide sequence ID" value="NM_001668.4"/>
</dbReference>
<dbReference type="RefSeq" id="NP_848514.1">
    <molecule id="P27540-2"/>
    <property type="nucleotide sequence ID" value="NM_178427.3"/>
</dbReference>
<dbReference type="RefSeq" id="XP_016856778.1">
    <molecule id="P27540-3"/>
    <property type="nucleotide sequence ID" value="XM_017001289.2"/>
</dbReference>
<dbReference type="RefSeq" id="XP_054192573.1">
    <molecule id="P27540-3"/>
    <property type="nucleotide sequence ID" value="XM_054336598.1"/>
</dbReference>
<dbReference type="PDB" id="1X0O">
    <property type="method" value="NMR"/>
    <property type="chains" value="A=356-470"/>
</dbReference>
<dbReference type="PDB" id="2A24">
    <property type="method" value="NMR"/>
    <property type="chains" value="B=358-465"/>
</dbReference>
<dbReference type="PDB" id="2B02">
    <property type="method" value="X-ray"/>
    <property type="resolution" value="1.50 A"/>
    <property type="chains" value="A=354-470"/>
</dbReference>
<dbReference type="PDB" id="2HV1">
    <property type="method" value="NMR"/>
    <property type="chains" value="A/B=356-470"/>
</dbReference>
<dbReference type="PDB" id="2K7S">
    <property type="method" value="NMR"/>
    <property type="chains" value="A=356-470"/>
</dbReference>
<dbReference type="PDB" id="3F1N">
    <property type="method" value="X-ray"/>
    <property type="resolution" value="1.48 A"/>
    <property type="chains" value="B=356-470"/>
</dbReference>
<dbReference type="PDB" id="3F1O">
    <property type="method" value="X-ray"/>
    <property type="resolution" value="1.60 A"/>
    <property type="chains" value="B=356-470"/>
</dbReference>
<dbReference type="PDB" id="3F1P">
    <property type="method" value="X-ray"/>
    <property type="resolution" value="1.17 A"/>
    <property type="chains" value="B=356-470"/>
</dbReference>
<dbReference type="PDB" id="3H7W">
    <property type="method" value="X-ray"/>
    <property type="resolution" value="1.65 A"/>
    <property type="chains" value="B=356-470"/>
</dbReference>
<dbReference type="PDB" id="3H82">
    <property type="method" value="X-ray"/>
    <property type="resolution" value="1.50 A"/>
    <property type="chains" value="B=356-470"/>
</dbReference>
<dbReference type="PDB" id="4EQ1">
    <property type="method" value="X-ray"/>
    <property type="resolution" value="1.60 A"/>
    <property type="chains" value="A/B=357-464"/>
</dbReference>
<dbReference type="PDB" id="4GHI">
    <property type="method" value="X-ray"/>
    <property type="resolution" value="1.50 A"/>
    <property type="chains" value="B=356-470"/>
</dbReference>
<dbReference type="PDB" id="4GS9">
    <property type="method" value="X-ray"/>
    <property type="resolution" value="1.72 A"/>
    <property type="chains" value="B=356-470"/>
</dbReference>
<dbReference type="PDB" id="4H6J">
    <property type="method" value="X-ray"/>
    <property type="resolution" value="1.52 A"/>
    <property type="chains" value="B=357-470"/>
</dbReference>
<dbReference type="PDB" id="4LPZ">
    <property type="method" value="X-ray"/>
    <property type="resolution" value="3.15 A"/>
    <property type="chains" value="A/B=356-470"/>
</dbReference>
<dbReference type="PDB" id="4PKY">
    <property type="method" value="X-ray"/>
    <property type="resolution" value="3.20 A"/>
    <property type="chains" value="A/D=356-470"/>
</dbReference>
<dbReference type="PDB" id="4XT2">
    <property type="method" value="X-ray"/>
    <property type="resolution" value="1.70 A"/>
    <property type="chains" value="B/D=356-470"/>
</dbReference>
<dbReference type="PDB" id="5TBM">
    <property type="method" value="X-ray"/>
    <property type="resolution" value="1.85 A"/>
    <property type="chains" value="B=356-467"/>
</dbReference>
<dbReference type="PDB" id="5UFP">
    <property type="method" value="X-ray"/>
    <property type="resolution" value="1.90 A"/>
    <property type="chains" value="B=356-467"/>
</dbReference>
<dbReference type="PDB" id="5V0L">
    <property type="method" value="X-ray"/>
    <property type="resolution" value="4.00 A"/>
    <property type="chains" value="A=70-346"/>
</dbReference>
<dbReference type="PDB" id="6CZW">
    <property type="method" value="X-ray"/>
    <property type="resolution" value="1.60 A"/>
    <property type="chains" value="B=356-470"/>
</dbReference>
<dbReference type="PDB" id="6D09">
    <property type="method" value="X-ray"/>
    <property type="resolution" value="1.85 A"/>
    <property type="chains" value="B=356-470"/>
</dbReference>
<dbReference type="PDB" id="6D0B">
    <property type="method" value="X-ray"/>
    <property type="resolution" value="1.60 A"/>
    <property type="chains" value="B=356-470"/>
</dbReference>
<dbReference type="PDB" id="6D0C">
    <property type="method" value="X-ray"/>
    <property type="resolution" value="1.50 A"/>
    <property type="chains" value="B=356-470"/>
</dbReference>
<dbReference type="PDB" id="6X21">
    <property type="method" value="X-ray"/>
    <property type="resolution" value="1.54 A"/>
    <property type="chains" value="B=356-467"/>
</dbReference>
<dbReference type="PDB" id="6X28">
    <property type="method" value="X-ray"/>
    <property type="resolution" value="1.92 A"/>
    <property type="chains" value="B=356-467"/>
</dbReference>
<dbReference type="PDB" id="6X2H">
    <property type="method" value="X-ray"/>
    <property type="resolution" value="2.00 A"/>
    <property type="chains" value="B=356-467"/>
</dbReference>
<dbReference type="PDB" id="6X37">
    <property type="method" value="X-ray"/>
    <property type="resolution" value="1.94 A"/>
    <property type="chains" value="B=356-467"/>
</dbReference>
<dbReference type="PDB" id="6X3D">
    <property type="method" value="X-ray"/>
    <property type="resolution" value="2.00 A"/>
    <property type="chains" value="B=356-467"/>
</dbReference>
<dbReference type="PDB" id="8CK3">
    <property type="method" value="X-ray"/>
    <property type="resolution" value="1.71 A"/>
    <property type="chains" value="B=356-470"/>
</dbReference>
<dbReference type="PDB" id="8CK4">
    <property type="method" value="X-ray"/>
    <property type="resolution" value="2.29 A"/>
    <property type="chains" value="B=356-470"/>
</dbReference>
<dbReference type="PDB" id="8CK8">
    <property type="method" value="X-ray"/>
    <property type="resolution" value="2.30 A"/>
    <property type="chains" value="B=356-470"/>
</dbReference>
<dbReference type="PDB" id="8G4A">
    <property type="method" value="X-ray"/>
    <property type="resolution" value="1.97 A"/>
    <property type="chains" value="A/B=356-470"/>
</dbReference>
<dbReference type="PDB" id="8XS6">
    <property type="method" value="X-ray"/>
    <property type="resolution" value="2.95 A"/>
    <property type="chains" value="A=85-465"/>
</dbReference>
<dbReference type="PDB" id="8XS7">
    <property type="method" value="X-ray"/>
    <property type="resolution" value="2.77 A"/>
    <property type="chains" value="A=85-465"/>
</dbReference>
<dbReference type="PDB" id="8XS8">
    <property type="method" value="X-ray"/>
    <property type="resolution" value="3.11 A"/>
    <property type="chains" value="A=85-465"/>
</dbReference>
<dbReference type="PDB" id="8XS9">
    <property type="method" value="X-ray"/>
    <property type="resolution" value="2.80 A"/>
    <property type="chains" value="A=85-465"/>
</dbReference>
<dbReference type="PDB" id="8XSA">
    <property type="method" value="X-ray"/>
    <property type="resolution" value="2.60 A"/>
    <property type="chains" value="A=85-465"/>
</dbReference>
<dbReference type="PDB" id="8XSB">
    <property type="method" value="X-ray"/>
    <property type="resolution" value="3.06 A"/>
    <property type="chains" value="A=85-465"/>
</dbReference>
<dbReference type="PDBsum" id="1X0O"/>
<dbReference type="PDBsum" id="2A24"/>
<dbReference type="PDBsum" id="2B02"/>
<dbReference type="PDBsum" id="2HV1"/>
<dbReference type="PDBsum" id="2K7S"/>
<dbReference type="PDBsum" id="3F1N"/>
<dbReference type="PDBsum" id="3F1O"/>
<dbReference type="PDBsum" id="3F1P"/>
<dbReference type="PDBsum" id="3H7W"/>
<dbReference type="PDBsum" id="3H82"/>
<dbReference type="PDBsum" id="4EQ1"/>
<dbReference type="PDBsum" id="4GHI"/>
<dbReference type="PDBsum" id="4GS9"/>
<dbReference type="PDBsum" id="4H6J"/>
<dbReference type="PDBsum" id="4LPZ"/>
<dbReference type="PDBsum" id="4PKY"/>
<dbReference type="PDBsum" id="4XT2"/>
<dbReference type="PDBsum" id="5TBM"/>
<dbReference type="PDBsum" id="5UFP"/>
<dbReference type="PDBsum" id="5V0L"/>
<dbReference type="PDBsum" id="6CZW"/>
<dbReference type="PDBsum" id="6D09"/>
<dbReference type="PDBsum" id="6D0B"/>
<dbReference type="PDBsum" id="6D0C"/>
<dbReference type="PDBsum" id="6X21"/>
<dbReference type="PDBsum" id="6X28"/>
<dbReference type="PDBsum" id="6X2H"/>
<dbReference type="PDBsum" id="6X37"/>
<dbReference type="PDBsum" id="6X3D"/>
<dbReference type="PDBsum" id="8CK3"/>
<dbReference type="PDBsum" id="8CK4"/>
<dbReference type="PDBsum" id="8CK8"/>
<dbReference type="PDBsum" id="8G4A"/>
<dbReference type="PDBsum" id="8XS6"/>
<dbReference type="PDBsum" id="8XS7"/>
<dbReference type="PDBsum" id="8XS8"/>
<dbReference type="PDBsum" id="8XS9"/>
<dbReference type="PDBsum" id="8XSA"/>
<dbReference type="PDBsum" id="8XSB"/>
<dbReference type="BMRB" id="P27540"/>
<dbReference type="SMR" id="P27540"/>
<dbReference type="BioGRID" id="106898">
    <property type="interactions" value="248"/>
</dbReference>
<dbReference type="ComplexPortal" id="CPX-2385">
    <property type="entry name" value="Hypoxia-inducible transcription factor complex, HIF2"/>
</dbReference>
<dbReference type="ComplexPortal" id="CPX-7381">
    <property type="entry name" value="Hypoxia-inducible transcription factor complex, HIF1"/>
</dbReference>
<dbReference type="CORUM" id="P27540"/>
<dbReference type="DIP" id="DIP-30886N"/>
<dbReference type="ELM" id="P27540"/>
<dbReference type="FunCoup" id="P27540">
    <property type="interactions" value="3224"/>
</dbReference>
<dbReference type="IntAct" id="P27540">
    <property type="interactions" value="65"/>
</dbReference>
<dbReference type="MINT" id="P27540"/>
<dbReference type="STRING" id="9606.ENSP00000351407"/>
<dbReference type="ChEMBL" id="CHEMBL5618"/>
<dbReference type="MoonDB" id="P27540">
    <property type="type" value="Predicted"/>
</dbReference>
<dbReference type="GlyCosmos" id="P27540">
    <property type="glycosylation" value="4 sites, 2 glycans"/>
</dbReference>
<dbReference type="GlyGen" id="P27540">
    <property type="glycosylation" value="10 sites, 2 N-linked glycans (2 sites), 2 O-linked glycans (8 sites)"/>
</dbReference>
<dbReference type="iPTMnet" id="P27540"/>
<dbReference type="PhosphoSitePlus" id="P27540"/>
<dbReference type="BioMuta" id="ARNT"/>
<dbReference type="DMDM" id="114163"/>
<dbReference type="jPOST" id="P27540"/>
<dbReference type="MassIVE" id="P27540"/>
<dbReference type="PaxDb" id="9606-ENSP00000351407"/>
<dbReference type="PeptideAtlas" id="P27540"/>
<dbReference type="ProteomicsDB" id="30540"/>
<dbReference type="ProteomicsDB" id="54398">
    <molecule id="P27540-1"/>
</dbReference>
<dbReference type="ProteomicsDB" id="54399">
    <molecule id="P27540-2"/>
</dbReference>
<dbReference type="ProteomicsDB" id="54400">
    <molecule id="P27540-3"/>
</dbReference>
<dbReference type="Pumba" id="P27540"/>
<dbReference type="Antibodypedia" id="916">
    <property type="antibodies" value="702 antibodies from 42 providers"/>
</dbReference>
<dbReference type="DNASU" id="405"/>
<dbReference type="Ensembl" id="ENST00000354396.6">
    <molecule id="P27540-4"/>
    <property type="protein sequence ID" value="ENSP00000346372.2"/>
    <property type="gene ID" value="ENSG00000143437.21"/>
</dbReference>
<dbReference type="Ensembl" id="ENST00000358595.10">
    <molecule id="P27540-1"/>
    <property type="protein sequence ID" value="ENSP00000351407.5"/>
    <property type="gene ID" value="ENSG00000143437.21"/>
</dbReference>
<dbReference type="Ensembl" id="ENST00000505755.5">
    <molecule id="P27540-2"/>
    <property type="protein sequence ID" value="ENSP00000427571.1"/>
    <property type="gene ID" value="ENSG00000143437.21"/>
</dbReference>
<dbReference type="Ensembl" id="ENST00000515192.5">
    <molecule id="P27540-3"/>
    <property type="protein sequence ID" value="ENSP00000423851.1"/>
    <property type="gene ID" value="ENSG00000143437.21"/>
</dbReference>
<dbReference type="GeneID" id="405"/>
<dbReference type="KEGG" id="hsa:405"/>
<dbReference type="MANE-Select" id="ENST00000358595.10">
    <property type="protein sequence ID" value="ENSP00000351407.5"/>
    <property type="RefSeq nucleotide sequence ID" value="NM_001668.4"/>
    <property type="RefSeq protein sequence ID" value="NP_001659.1"/>
</dbReference>
<dbReference type="UCSC" id="uc001evr.2">
    <molecule id="P27540-1"/>
    <property type="organism name" value="human"/>
</dbReference>
<dbReference type="AGR" id="HGNC:700"/>
<dbReference type="CTD" id="405"/>
<dbReference type="DisGeNET" id="405"/>
<dbReference type="GeneCards" id="ARNT"/>
<dbReference type="HGNC" id="HGNC:700">
    <property type="gene designation" value="ARNT"/>
</dbReference>
<dbReference type="HPA" id="ENSG00000143437">
    <property type="expression patterns" value="Low tissue specificity"/>
</dbReference>
<dbReference type="MIM" id="126110">
    <property type="type" value="gene"/>
</dbReference>
<dbReference type="neXtProt" id="NX_P27540"/>
<dbReference type="OpenTargets" id="ENSG00000143437"/>
<dbReference type="PharmGKB" id="PA24994"/>
<dbReference type="VEuPathDB" id="HostDB:ENSG00000143437"/>
<dbReference type="eggNOG" id="KOG3561">
    <property type="taxonomic scope" value="Eukaryota"/>
</dbReference>
<dbReference type="GeneTree" id="ENSGT00940000157585"/>
<dbReference type="HOGENOM" id="CLU_011864_1_1_1"/>
<dbReference type="InParanoid" id="P27540"/>
<dbReference type="OMA" id="LXSDDEQ"/>
<dbReference type="OrthoDB" id="71302at2759"/>
<dbReference type="PAN-GO" id="P27540">
    <property type="GO annotations" value="4 GO annotations based on evolutionary models"/>
</dbReference>
<dbReference type="PhylomeDB" id="P27540"/>
<dbReference type="TreeFam" id="TF319983"/>
<dbReference type="PathwayCommons" id="P27540"/>
<dbReference type="Reactome" id="R-HSA-1234158">
    <property type="pathway name" value="Regulation of gene expression by Hypoxia-inducible Factor"/>
</dbReference>
<dbReference type="Reactome" id="R-HSA-1989781">
    <property type="pathway name" value="PPARA activates gene expression"/>
</dbReference>
<dbReference type="Reactome" id="R-HSA-211945">
    <property type="pathway name" value="Phase I - Functionalization of compounds"/>
</dbReference>
<dbReference type="Reactome" id="R-HSA-211976">
    <property type="pathway name" value="Endogenous sterols"/>
</dbReference>
<dbReference type="Reactome" id="R-HSA-211981">
    <property type="pathway name" value="Xenobiotics"/>
</dbReference>
<dbReference type="Reactome" id="R-HSA-8937144">
    <property type="pathway name" value="Aryl hydrocarbon receptor signalling"/>
</dbReference>
<dbReference type="Reactome" id="R-HSA-9768919">
    <property type="pathway name" value="NPAS4 regulates expression of target genes"/>
</dbReference>
<dbReference type="SignaLink" id="P27540"/>
<dbReference type="SIGNOR" id="P27540"/>
<dbReference type="BioGRID-ORCS" id="405">
    <property type="hits" value="74 hits in 1190 CRISPR screens"/>
</dbReference>
<dbReference type="ChiTaRS" id="ARNT">
    <property type="organism name" value="human"/>
</dbReference>
<dbReference type="EvolutionaryTrace" id="P27540"/>
<dbReference type="GeneWiki" id="Aryl_hydrocarbon_receptor_nuclear_translocator"/>
<dbReference type="GenomeRNAi" id="405"/>
<dbReference type="Pharos" id="P27540">
    <property type="development level" value="Tbio"/>
</dbReference>
<dbReference type="PRO" id="PR:P27540"/>
<dbReference type="Proteomes" id="UP000005640">
    <property type="component" value="Chromosome 1"/>
</dbReference>
<dbReference type="RNAct" id="P27540">
    <property type="molecule type" value="protein"/>
</dbReference>
<dbReference type="Bgee" id="ENSG00000143437">
    <property type="expression patterns" value="Expressed in colonic epithelium and 201 other cell types or tissues"/>
</dbReference>
<dbReference type="ExpressionAtlas" id="P27540">
    <property type="expression patterns" value="baseline and differential"/>
</dbReference>
<dbReference type="GO" id="GO:0034751">
    <property type="term" value="C:aryl hydrocarbon receptor complex"/>
    <property type="evidence" value="ECO:0000318"/>
    <property type="project" value="GO_Central"/>
</dbReference>
<dbReference type="GO" id="GO:0000785">
    <property type="term" value="C:chromatin"/>
    <property type="evidence" value="ECO:0000247"/>
    <property type="project" value="NTNU_SB"/>
</dbReference>
<dbReference type="GO" id="GO:0005737">
    <property type="term" value="C:cytoplasm"/>
    <property type="evidence" value="ECO:0007669"/>
    <property type="project" value="Ensembl"/>
</dbReference>
<dbReference type="GO" id="GO:0034753">
    <property type="term" value="C:nuclear aryl hydrocarbon receptor complex"/>
    <property type="evidence" value="ECO:0000314"/>
    <property type="project" value="UniProtKB"/>
</dbReference>
<dbReference type="GO" id="GO:0016604">
    <property type="term" value="C:nuclear body"/>
    <property type="evidence" value="ECO:0000314"/>
    <property type="project" value="HPA"/>
</dbReference>
<dbReference type="GO" id="GO:0005654">
    <property type="term" value="C:nucleoplasm"/>
    <property type="evidence" value="ECO:0000314"/>
    <property type="project" value="HPA"/>
</dbReference>
<dbReference type="GO" id="GO:0005634">
    <property type="term" value="C:nucleus"/>
    <property type="evidence" value="ECO:0000314"/>
    <property type="project" value="UniProtKB"/>
</dbReference>
<dbReference type="GO" id="GO:0090575">
    <property type="term" value="C:RNA polymerase II transcription regulator complex"/>
    <property type="evidence" value="ECO:0000314"/>
    <property type="project" value="BHF-UCL"/>
</dbReference>
<dbReference type="GO" id="GO:0017162">
    <property type="term" value="F:aryl hydrocarbon receptor binding"/>
    <property type="evidence" value="ECO:0000353"/>
    <property type="project" value="BHF-UCL"/>
</dbReference>
<dbReference type="GO" id="GO:0000987">
    <property type="term" value="F:cis-regulatory region sequence-specific DNA binding"/>
    <property type="evidence" value="ECO:0000314"/>
    <property type="project" value="MGI"/>
</dbReference>
<dbReference type="GO" id="GO:0003700">
    <property type="term" value="F:DNA-binding transcription factor activity"/>
    <property type="evidence" value="ECO:0000314"/>
    <property type="project" value="UniProt"/>
</dbReference>
<dbReference type="GO" id="GO:0000981">
    <property type="term" value="F:DNA-binding transcription factor activity, RNA polymerase II-specific"/>
    <property type="evidence" value="ECO:0000247"/>
    <property type="project" value="NTNU_SB"/>
</dbReference>
<dbReference type="GO" id="GO:0004879">
    <property type="term" value="F:nuclear receptor activity"/>
    <property type="evidence" value="ECO:0007669"/>
    <property type="project" value="Ensembl"/>
</dbReference>
<dbReference type="GO" id="GO:0046982">
    <property type="term" value="F:protein heterodimerization activity"/>
    <property type="evidence" value="ECO:0000314"/>
    <property type="project" value="UniProtKB"/>
</dbReference>
<dbReference type="GO" id="GO:0042803">
    <property type="term" value="F:protein homodimerization activity"/>
    <property type="evidence" value="ECO:0000314"/>
    <property type="project" value="UniProtKB"/>
</dbReference>
<dbReference type="GO" id="GO:0000978">
    <property type="term" value="F:RNA polymerase II cis-regulatory region sequence-specific DNA binding"/>
    <property type="evidence" value="ECO:0000318"/>
    <property type="project" value="GO_Central"/>
</dbReference>
<dbReference type="GO" id="GO:0061629">
    <property type="term" value="F:RNA polymerase II-specific DNA-binding transcription factor binding"/>
    <property type="evidence" value="ECO:0000353"/>
    <property type="project" value="BHF-UCL"/>
</dbReference>
<dbReference type="GO" id="GO:0043565">
    <property type="term" value="F:sequence-specific DNA binding"/>
    <property type="evidence" value="ECO:0000314"/>
    <property type="project" value="BHF-UCL"/>
</dbReference>
<dbReference type="GO" id="GO:1990837">
    <property type="term" value="F:sequence-specific double-stranded DNA binding"/>
    <property type="evidence" value="ECO:0000314"/>
    <property type="project" value="UniProtKB"/>
</dbReference>
<dbReference type="GO" id="GO:0030154">
    <property type="term" value="P:cell differentiation"/>
    <property type="evidence" value="ECO:0007669"/>
    <property type="project" value="Ensembl"/>
</dbReference>
<dbReference type="GO" id="GO:0034599">
    <property type="term" value="P:cellular response to oxidative stress"/>
    <property type="evidence" value="ECO:0000314"/>
    <property type="project" value="BHF-UCL"/>
</dbReference>
<dbReference type="GO" id="GO:0001892">
    <property type="term" value="P:embryonic placenta development"/>
    <property type="evidence" value="ECO:0007669"/>
    <property type="project" value="Ensembl"/>
</dbReference>
<dbReference type="GO" id="GO:0050728">
    <property type="term" value="P:negative regulation of inflammatory response"/>
    <property type="evidence" value="ECO:0000314"/>
    <property type="project" value="UniProt"/>
</dbReference>
<dbReference type="GO" id="GO:0001938">
    <property type="term" value="P:positive regulation of endothelial cell proliferation"/>
    <property type="evidence" value="ECO:0000305"/>
    <property type="project" value="BHF-UCL"/>
</dbReference>
<dbReference type="GO" id="GO:0045648">
    <property type="term" value="P:positive regulation of erythrocyte differentiation"/>
    <property type="evidence" value="ECO:0000305"/>
    <property type="project" value="BHF-UCL"/>
</dbReference>
<dbReference type="GO" id="GO:0045821">
    <property type="term" value="P:positive regulation of glycolytic process"/>
    <property type="evidence" value="ECO:0000314"/>
    <property type="project" value="BHF-UCL"/>
</dbReference>
<dbReference type="GO" id="GO:0046886">
    <property type="term" value="P:positive regulation of hormone biosynthetic process"/>
    <property type="evidence" value="ECO:0000314"/>
    <property type="project" value="BHF-UCL"/>
</dbReference>
<dbReference type="GO" id="GO:0033235">
    <property type="term" value="P:positive regulation of protein sumoylation"/>
    <property type="evidence" value="ECO:0007669"/>
    <property type="project" value="Ensembl"/>
</dbReference>
<dbReference type="GO" id="GO:0045944">
    <property type="term" value="P:positive regulation of transcription by RNA polymerase II"/>
    <property type="evidence" value="ECO:0000314"/>
    <property type="project" value="UniProtKB"/>
</dbReference>
<dbReference type="GO" id="GO:0010575">
    <property type="term" value="P:positive regulation of vascular endothelial growth factor production"/>
    <property type="evidence" value="ECO:0000314"/>
    <property type="project" value="BHF-UCL"/>
</dbReference>
<dbReference type="GO" id="GO:0030949">
    <property type="term" value="P:positive regulation of vascular endothelial growth factor receptor signaling pathway"/>
    <property type="evidence" value="ECO:0000305"/>
    <property type="project" value="BHF-UCL"/>
</dbReference>
<dbReference type="GO" id="GO:0006357">
    <property type="term" value="P:regulation of transcription by RNA polymerase II"/>
    <property type="evidence" value="ECO:0000318"/>
    <property type="project" value="GO_Central"/>
</dbReference>
<dbReference type="GO" id="GO:0001666">
    <property type="term" value="P:response to hypoxia"/>
    <property type="evidence" value="ECO:0000314"/>
    <property type="project" value="BHF-UCL"/>
</dbReference>
<dbReference type="CDD" id="cd18947">
    <property type="entry name" value="bHLH-PAS_ARNT"/>
    <property type="match status" value="1"/>
</dbReference>
<dbReference type="CDD" id="cd00130">
    <property type="entry name" value="PAS"/>
    <property type="match status" value="2"/>
</dbReference>
<dbReference type="FunFam" id="3.30.450.20:FF:000028">
    <property type="entry name" value="Aryl hydrocarbon receptor nuclear translocator 1"/>
    <property type="match status" value="1"/>
</dbReference>
<dbReference type="FunFam" id="3.30.450.20:FF:000003">
    <property type="entry name" value="Aryl hydrocarbon receptor nuclear translocator 2"/>
    <property type="match status" value="1"/>
</dbReference>
<dbReference type="FunFam" id="4.10.280.10:FF:000011">
    <property type="entry name" value="Aryl hydrocarbon receptor nuclear translocator 2"/>
    <property type="match status" value="1"/>
</dbReference>
<dbReference type="Gene3D" id="4.10.280.10">
    <property type="entry name" value="Helix-loop-helix DNA-binding domain"/>
    <property type="match status" value="1"/>
</dbReference>
<dbReference type="Gene3D" id="3.30.450.20">
    <property type="entry name" value="PAS domain"/>
    <property type="match status" value="2"/>
</dbReference>
<dbReference type="InterPro" id="IPR011598">
    <property type="entry name" value="bHLH_dom"/>
</dbReference>
<dbReference type="InterPro" id="IPR050933">
    <property type="entry name" value="Circadian_TF"/>
</dbReference>
<dbReference type="InterPro" id="IPR036638">
    <property type="entry name" value="HLH_DNA-bd_sf"/>
</dbReference>
<dbReference type="InterPro" id="IPR001067">
    <property type="entry name" value="Nuc_translocat"/>
</dbReference>
<dbReference type="InterPro" id="IPR001610">
    <property type="entry name" value="PAC"/>
</dbReference>
<dbReference type="InterPro" id="IPR000014">
    <property type="entry name" value="PAS"/>
</dbReference>
<dbReference type="InterPro" id="IPR035965">
    <property type="entry name" value="PAS-like_dom_sf"/>
</dbReference>
<dbReference type="InterPro" id="IPR013767">
    <property type="entry name" value="PAS_fold"/>
</dbReference>
<dbReference type="NCBIfam" id="TIGR00229">
    <property type="entry name" value="sensory_box"/>
    <property type="match status" value="1"/>
</dbReference>
<dbReference type="PANTHER" id="PTHR23042">
    <property type="entry name" value="CIRCADIAN PROTEIN CLOCK/ARNT/BMAL/PAS"/>
    <property type="match status" value="1"/>
</dbReference>
<dbReference type="Pfam" id="PF00010">
    <property type="entry name" value="HLH"/>
    <property type="match status" value="1"/>
</dbReference>
<dbReference type="Pfam" id="PF00989">
    <property type="entry name" value="PAS"/>
    <property type="match status" value="1"/>
</dbReference>
<dbReference type="Pfam" id="PF14598">
    <property type="entry name" value="PAS_11"/>
    <property type="match status" value="1"/>
</dbReference>
<dbReference type="PRINTS" id="PR00785">
    <property type="entry name" value="NCTRNSLOCATR"/>
</dbReference>
<dbReference type="SMART" id="SM00353">
    <property type="entry name" value="HLH"/>
    <property type="match status" value="1"/>
</dbReference>
<dbReference type="SMART" id="SM00086">
    <property type="entry name" value="PAC"/>
    <property type="match status" value="1"/>
</dbReference>
<dbReference type="SMART" id="SM00091">
    <property type="entry name" value="PAS"/>
    <property type="match status" value="2"/>
</dbReference>
<dbReference type="SUPFAM" id="SSF47459">
    <property type="entry name" value="HLH, helix-loop-helix DNA-binding domain"/>
    <property type="match status" value="1"/>
</dbReference>
<dbReference type="SUPFAM" id="SSF88633">
    <property type="entry name" value="Positive stranded ssRNA viruses"/>
    <property type="match status" value="1"/>
</dbReference>
<dbReference type="SUPFAM" id="SSF55785">
    <property type="entry name" value="PYP-like sensor domain (PAS domain)"/>
    <property type="match status" value="2"/>
</dbReference>
<dbReference type="PROSITE" id="PS50888">
    <property type="entry name" value="BHLH"/>
    <property type="match status" value="1"/>
</dbReference>
<dbReference type="PROSITE" id="PS50112">
    <property type="entry name" value="PAS"/>
    <property type="match status" value="2"/>
</dbReference>
<name>ARNT_HUMAN</name>
<evidence type="ECO:0000250" key="1"/>
<evidence type="ECO:0000250" key="2">
    <source>
        <dbReference type="UniProtKB" id="P53762"/>
    </source>
</evidence>
<evidence type="ECO:0000255" key="3">
    <source>
        <dbReference type="PROSITE-ProRule" id="PRU00140"/>
    </source>
</evidence>
<evidence type="ECO:0000255" key="4">
    <source>
        <dbReference type="PROSITE-ProRule" id="PRU00981"/>
    </source>
</evidence>
<evidence type="ECO:0000256" key="5">
    <source>
        <dbReference type="SAM" id="MobiDB-lite"/>
    </source>
</evidence>
<evidence type="ECO:0000269" key="6">
    <source>
    </source>
</evidence>
<evidence type="ECO:0000269" key="7">
    <source>
    </source>
</evidence>
<evidence type="ECO:0000269" key="8">
    <source>
    </source>
</evidence>
<evidence type="ECO:0000269" key="9">
    <source>
    </source>
</evidence>
<evidence type="ECO:0000269" key="10">
    <source>
    </source>
</evidence>
<evidence type="ECO:0000269" key="11">
    <source>
    </source>
</evidence>
<evidence type="ECO:0000269" key="12">
    <source ref="6"/>
</evidence>
<evidence type="ECO:0000303" key="13">
    <source>
    </source>
</evidence>
<evidence type="ECO:0000303" key="14">
    <source>
    </source>
</evidence>
<evidence type="ECO:0000303" key="15">
    <source ref="4"/>
</evidence>
<evidence type="ECO:0000305" key="16"/>
<evidence type="ECO:0000305" key="17">
    <source>
    </source>
</evidence>
<evidence type="ECO:0000305" key="18">
    <source>
    </source>
</evidence>
<evidence type="ECO:0000312" key="19">
    <source>
        <dbReference type="HGNC" id="HGNC:700"/>
    </source>
</evidence>
<evidence type="ECO:0007744" key="20">
    <source>
        <dbReference type="PDB" id="1X0O"/>
    </source>
</evidence>
<evidence type="ECO:0007744" key="21">
    <source>
        <dbReference type="PDB" id="2A24"/>
    </source>
</evidence>
<evidence type="ECO:0007744" key="22">
    <source>
        <dbReference type="PDB" id="2K7S"/>
    </source>
</evidence>
<evidence type="ECO:0007744" key="23">
    <source>
        <dbReference type="PDB" id="5V0L"/>
    </source>
</evidence>
<evidence type="ECO:0007744" key="24">
    <source>
    </source>
</evidence>
<evidence type="ECO:0007744" key="25">
    <source>
    </source>
</evidence>
<evidence type="ECO:0007744" key="26">
    <source>
    </source>
</evidence>
<evidence type="ECO:0007744" key="27">
    <source>
    </source>
</evidence>
<evidence type="ECO:0007829" key="28">
    <source>
        <dbReference type="PDB" id="2B02"/>
    </source>
</evidence>
<evidence type="ECO:0007829" key="29">
    <source>
        <dbReference type="PDB" id="2K7S"/>
    </source>
</evidence>
<evidence type="ECO:0007829" key="30">
    <source>
        <dbReference type="PDB" id="3F1N"/>
    </source>
</evidence>
<evidence type="ECO:0007829" key="31">
    <source>
        <dbReference type="PDB" id="3F1P"/>
    </source>
</evidence>